<name>RUVC_XANOM</name>
<proteinExistence type="inferred from homology"/>
<dbReference type="EC" id="3.1.21.10" evidence="1"/>
<dbReference type="EMBL" id="AP008229">
    <property type="protein sequence ID" value="BAE68299.1"/>
    <property type="molecule type" value="Genomic_DNA"/>
</dbReference>
<dbReference type="RefSeq" id="WP_011258431.1">
    <property type="nucleotide sequence ID" value="NC_007705.1"/>
</dbReference>
<dbReference type="SMR" id="Q2P578"/>
<dbReference type="KEGG" id="xom:XOO1544"/>
<dbReference type="HOGENOM" id="CLU_091257_2_1_6"/>
<dbReference type="GO" id="GO:0005737">
    <property type="term" value="C:cytoplasm"/>
    <property type="evidence" value="ECO:0007669"/>
    <property type="project" value="UniProtKB-SubCell"/>
</dbReference>
<dbReference type="GO" id="GO:0048476">
    <property type="term" value="C:Holliday junction resolvase complex"/>
    <property type="evidence" value="ECO:0007669"/>
    <property type="project" value="UniProtKB-UniRule"/>
</dbReference>
<dbReference type="GO" id="GO:0008821">
    <property type="term" value="F:crossover junction DNA endonuclease activity"/>
    <property type="evidence" value="ECO:0007669"/>
    <property type="project" value="UniProtKB-UniRule"/>
</dbReference>
<dbReference type="GO" id="GO:0003677">
    <property type="term" value="F:DNA binding"/>
    <property type="evidence" value="ECO:0007669"/>
    <property type="project" value="UniProtKB-KW"/>
</dbReference>
<dbReference type="GO" id="GO:0000287">
    <property type="term" value="F:magnesium ion binding"/>
    <property type="evidence" value="ECO:0007669"/>
    <property type="project" value="UniProtKB-UniRule"/>
</dbReference>
<dbReference type="GO" id="GO:0006310">
    <property type="term" value="P:DNA recombination"/>
    <property type="evidence" value="ECO:0007669"/>
    <property type="project" value="UniProtKB-UniRule"/>
</dbReference>
<dbReference type="GO" id="GO:0006281">
    <property type="term" value="P:DNA repair"/>
    <property type="evidence" value="ECO:0007669"/>
    <property type="project" value="UniProtKB-UniRule"/>
</dbReference>
<dbReference type="CDD" id="cd16962">
    <property type="entry name" value="RuvC"/>
    <property type="match status" value="1"/>
</dbReference>
<dbReference type="FunFam" id="3.30.420.10:FF:000002">
    <property type="entry name" value="Crossover junction endodeoxyribonuclease RuvC"/>
    <property type="match status" value="1"/>
</dbReference>
<dbReference type="Gene3D" id="3.30.420.10">
    <property type="entry name" value="Ribonuclease H-like superfamily/Ribonuclease H"/>
    <property type="match status" value="1"/>
</dbReference>
<dbReference type="HAMAP" id="MF_00034">
    <property type="entry name" value="RuvC"/>
    <property type="match status" value="1"/>
</dbReference>
<dbReference type="InterPro" id="IPR012337">
    <property type="entry name" value="RNaseH-like_sf"/>
</dbReference>
<dbReference type="InterPro" id="IPR036397">
    <property type="entry name" value="RNaseH_sf"/>
</dbReference>
<dbReference type="InterPro" id="IPR020563">
    <property type="entry name" value="X-over_junc_endoDNase_Mg_BS"/>
</dbReference>
<dbReference type="InterPro" id="IPR002176">
    <property type="entry name" value="X-over_junc_endoDNase_RuvC"/>
</dbReference>
<dbReference type="NCBIfam" id="TIGR00228">
    <property type="entry name" value="ruvC"/>
    <property type="match status" value="1"/>
</dbReference>
<dbReference type="PANTHER" id="PTHR30194">
    <property type="entry name" value="CROSSOVER JUNCTION ENDODEOXYRIBONUCLEASE RUVC"/>
    <property type="match status" value="1"/>
</dbReference>
<dbReference type="PANTHER" id="PTHR30194:SF3">
    <property type="entry name" value="CROSSOVER JUNCTION ENDODEOXYRIBONUCLEASE RUVC"/>
    <property type="match status" value="1"/>
</dbReference>
<dbReference type="Pfam" id="PF02075">
    <property type="entry name" value="RuvC"/>
    <property type="match status" value="1"/>
</dbReference>
<dbReference type="PRINTS" id="PR00696">
    <property type="entry name" value="RSOLVASERUVC"/>
</dbReference>
<dbReference type="SUPFAM" id="SSF53098">
    <property type="entry name" value="Ribonuclease H-like"/>
    <property type="match status" value="1"/>
</dbReference>
<dbReference type="PROSITE" id="PS01321">
    <property type="entry name" value="RUVC"/>
    <property type="match status" value="1"/>
</dbReference>
<protein>
    <recommendedName>
        <fullName evidence="1">Crossover junction endodeoxyribonuclease RuvC</fullName>
        <ecNumber evidence="1">3.1.21.10</ecNumber>
    </recommendedName>
    <alternativeName>
        <fullName evidence="1">Holliday junction nuclease RuvC</fullName>
    </alternativeName>
    <alternativeName>
        <fullName evidence="1">Holliday junction resolvase RuvC</fullName>
    </alternativeName>
</protein>
<sequence>MTRILGIDPGSQRTGIGIIDIDEGGRSRHVHHAPLILLGEGDFSQRLKRLLHGLGELIETYRPDEVAIEKVFMGKSAASALKLGQARGAAICAVVMRDLPVHEYAATEVKLALVGKGGADKLQVQHMVGIMLNLKGKLQPDAADALAVAITHAHVRATAQCLGVNTQQAWSRKK</sequence>
<evidence type="ECO:0000255" key="1">
    <source>
        <dbReference type="HAMAP-Rule" id="MF_00034"/>
    </source>
</evidence>
<comment type="function">
    <text evidence="1">The RuvA-RuvB-RuvC complex processes Holliday junction (HJ) DNA during genetic recombination and DNA repair. Endonuclease that resolves HJ intermediates. Cleaves cruciform DNA by making single-stranded nicks across the HJ at symmetrical positions within the homologous arms, yielding a 5'-phosphate and a 3'-hydroxyl group; requires a central core of homology in the junction. The consensus cleavage sequence is 5'-(A/T)TT(C/G)-3'. Cleavage occurs on the 3'-side of the TT dinucleotide at the point of strand exchange. HJ branch migration catalyzed by RuvA-RuvB allows RuvC to scan DNA until it finds its consensus sequence, where it cleaves and resolves the cruciform DNA.</text>
</comment>
<comment type="catalytic activity">
    <reaction evidence="1">
        <text>Endonucleolytic cleavage at a junction such as a reciprocal single-stranded crossover between two homologous DNA duplexes (Holliday junction).</text>
        <dbReference type="EC" id="3.1.21.10"/>
    </reaction>
</comment>
<comment type="cofactor">
    <cofactor evidence="1">
        <name>Mg(2+)</name>
        <dbReference type="ChEBI" id="CHEBI:18420"/>
    </cofactor>
    <text evidence="1">Binds 2 Mg(2+) ion per subunit.</text>
</comment>
<comment type="subunit">
    <text evidence="1">Homodimer which binds Holliday junction (HJ) DNA. The HJ becomes 2-fold symmetrical on binding to RuvC with unstacked arms; it has a different conformation from HJ DNA in complex with RuvA. In the full resolvosome a probable DNA-RuvA(4)-RuvB(12)-RuvC(2) complex forms which resolves the HJ.</text>
</comment>
<comment type="subcellular location">
    <subcellularLocation>
        <location evidence="1">Cytoplasm</location>
    </subcellularLocation>
</comment>
<comment type="similarity">
    <text evidence="1">Belongs to the RuvC family.</text>
</comment>
<gene>
    <name evidence="1" type="primary">ruvC</name>
    <name type="ordered locus">XOO1544</name>
</gene>
<organism>
    <name type="scientific">Xanthomonas oryzae pv. oryzae (strain MAFF 311018)</name>
    <dbReference type="NCBI Taxonomy" id="342109"/>
    <lineage>
        <taxon>Bacteria</taxon>
        <taxon>Pseudomonadati</taxon>
        <taxon>Pseudomonadota</taxon>
        <taxon>Gammaproteobacteria</taxon>
        <taxon>Lysobacterales</taxon>
        <taxon>Lysobacteraceae</taxon>
        <taxon>Xanthomonas</taxon>
    </lineage>
</organism>
<keyword id="KW-0963">Cytoplasm</keyword>
<keyword id="KW-0227">DNA damage</keyword>
<keyword id="KW-0233">DNA recombination</keyword>
<keyword id="KW-0234">DNA repair</keyword>
<keyword id="KW-0238">DNA-binding</keyword>
<keyword id="KW-0255">Endonuclease</keyword>
<keyword id="KW-0378">Hydrolase</keyword>
<keyword id="KW-0460">Magnesium</keyword>
<keyword id="KW-0479">Metal-binding</keyword>
<keyword id="KW-0540">Nuclease</keyword>
<reference key="1">
    <citation type="journal article" date="2005" name="Jpn. Agric. Res. Q.">
        <title>Genome sequence of Xanthomonas oryzae pv. oryzae suggests contribution of large numbers of effector genes and insertion sequences to its race diversity.</title>
        <authorList>
            <person name="Ochiai H."/>
            <person name="Inoue Y."/>
            <person name="Takeya M."/>
            <person name="Sasaki A."/>
            <person name="Kaku H."/>
        </authorList>
    </citation>
    <scope>NUCLEOTIDE SEQUENCE [LARGE SCALE GENOMIC DNA]</scope>
    <source>
        <strain>MAFF 311018</strain>
    </source>
</reference>
<accession>Q2P578</accession>
<feature type="chain" id="PRO_1000002854" description="Crossover junction endodeoxyribonuclease RuvC">
    <location>
        <begin position="1"/>
        <end position="174"/>
    </location>
</feature>
<feature type="active site" evidence="1">
    <location>
        <position position="8"/>
    </location>
</feature>
<feature type="active site" evidence="1">
    <location>
        <position position="69"/>
    </location>
</feature>
<feature type="active site" evidence="1">
    <location>
        <position position="141"/>
    </location>
</feature>
<feature type="binding site" evidence="1">
    <location>
        <position position="8"/>
    </location>
    <ligand>
        <name>Mg(2+)</name>
        <dbReference type="ChEBI" id="CHEBI:18420"/>
        <label>1</label>
    </ligand>
</feature>
<feature type="binding site" evidence="1">
    <location>
        <position position="69"/>
    </location>
    <ligand>
        <name>Mg(2+)</name>
        <dbReference type="ChEBI" id="CHEBI:18420"/>
        <label>2</label>
    </ligand>
</feature>
<feature type="binding site" evidence="1">
    <location>
        <position position="141"/>
    </location>
    <ligand>
        <name>Mg(2+)</name>
        <dbReference type="ChEBI" id="CHEBI:18420"/>
        <label>1</label>
    </ligand>
</feature>